<proteinExistence type="evidence at protein level"/>
<keyword id="KW-0156">Chromatin regulator</keyword>
<keyword id="KW-0175">Coiled coil</keyword>
<keyword id="KW-0238">DNA-binding</keyword>
<keyword id="KW-0539">Nucleus</keyword>
<keyword id="KW-1185">Reference proteome</keyword>
<keyword id="KW-0804">Transcription</keyword>
<keyword id="KW-0805">Transcription regulation</keyword>
<comment type="function">
    <text evidence="2">Chromatin-associated protein which contributes to the modulation of chromatin structure (such as super-helical structure of DNA) and function (By similarity). Binds to chromatin of protein-coding genes throughout the genome to regulate nucleosome occupancy and chromatin accessibility, and to modulate the expression of target genes (By similarity).</text>
</comment>
<comment type="subunit">
    <text evidence="7">Interacts with DEK3.</text>
</comment>
<comment type="subcellular location">
    <subcellularLocation>
        <location evidence="2 4">Nucleus</location>
    </subcellularLocation>
    <subcellularLocation>
        <location evidence="2">Nucleus</location>
        <location evidence="2">Nucleolus</location>
    </subcellularLocation>
    <text evidence="1 2">Associates with chromatin (By similarity). Enriched in regions where chromatin is decondensed or sparse in the interphase nuclei (By similarity).</text>
</comment>
<comment type="sequence caution" evidence="10">
    <conflict type="erroneous gene model prediction">
        <sequence resource="EMBL-CDS" id="BAB09233"/>
    </conflict>
</comment>
<feature type="chain" id="PRO_0000453267" description="DEK domain-containing chromatin-associated protein 4">
    <location>
        <begin position="1"/>
        <end position="778"/>
    </location>
</feature>
<feature type="domain" description="DEK-C" evidence="5">
    <location>
        <begin position="685"/>
        <end position="740"/>
    </location>
</feature>
<feature type="DNA-binding region" evidence="1">
    <location>
        <begin position="703"/>
        <end position="717"/>
    </location>
</feature>
<feature type="DNA-binding region" evidence="1">
    <location>
        <begin position="732"/>
        <end position="736"/>
    </location>
</feature>
<feature type="region of interest" description="Disordered" evidence="6">
    <location>
        <begin position="1"/>
        <end position="334"/>
    </location>
</feature>
<feature type="region of interest" description="Disordered" evidence="6">
    <location>
        <begin position="475"/>
        <end position="689"/>
    </location>
</feature>
<feature type="region of interest" description="Disordered" evidence="6">
    <location>
        <begin position="741"/>
        <end position="778"/>
    </location>
</feature>
<feature type="coiled-coil region" evidence="3">
    <location>
        <begin position="191"/>
        <end position="300"/>
    </location>
</feature>
<feature type="coiled-coil region" evidence="3">
    <location>
        <begin position="526"/>
        <end position="587"/>
    </location>
</feature>
<feature type="coiled-coil region" evidence="3">
    <location>
        <begin position="732"/>
        <end position="766"/>
    </location>
</feature>
<feature type="short sequence motif" description="Nuclear localization signal 1" evidence="4">
    <location>
        <begin position="289"/>
        <end position="296"/>
    </location>
</feature>
<feature type="short sequence motif" description="Nuclear localization signal 2" evidence="4">
    <location>
        <begin position="489"/>
        <end position="496"/>
    </location>
</feature>
<feature type="short sequence motif" description="Nuclear localization signal 3" evidence="4">
    <location>
        <begin position="618"/>
        <end position="625"/>
    </location>
</feature>
<feature type="compositionally biased region" description="Polar residues" evidence="6">
    <location>
        <begin position="14"/>
        <end position="26"/>
    </location>
</feature>
<feature type="compositionally biased region" description="Basic and acidic residues" evidence="6">
    <location>
        <begin position="40"/>
        <end position="95"/>
    </location>
</feature>
<feature type="compositionally biased region" description="Basic and acidic residues" evidence="6">
    <location>
        <begin position="121"/>
        <end position="153"/>
    </location>
</feature>
<feature type="compositionally biased region" description="Basic and acidic residues" evidence="6">
    <location>
        <begin position="165"/>
        <end position="185"/>
    </location>
</feature>
<feature type="compositionally biased region" description="Basic and acidic residues" evidence="6">
    <location>
        <begin position="209"/>
        <end position="243"/>
    </location>
</feature>
<feature type="compositionally biased region" description="Acidic residues" evidence="6">
    <location>
        <begin position="244"/>
        <end position="286"/>
    </location>
</feature>
<feature type="compositionally biased region" description="Basic and acidic residues" evidence="6">
    <location>
        <begin position="287"/>
        <end position="296"/>
    </location>
</feature>
<feature type="compositionally biased region" description="Basic and acidic residues" evidence="6">
    <location>
        <begin position="303"/>
        <end position="323"/>
    </location>
</feature>
<feature type="compositionally biased region" description="Low complexity" evidence="6">
    <location>
        <begin position="491"/>
        <end position="502"/>
    </location>
</feature>
<feature type="compositionally biased region" description="Acidic residues" evidence="6">
    <location>
        <begin position="527"/>
        <end position="553"/>
    </location>
</feature>
<feature type="compositionally biased region" description="Acidic residues" evidence="6">
    <location>
        <begin position="560"/>
        <end position="582"/>
    </location>
</feature>
<feature type="compositionally biased region" description="Basic residues" evidence="6">
    <location>
        <begin position="621"/>
        <end position="631"/>
    </location>
</feature>
<feature type="compositionally biased region" description="Basic and acidic residues" evidence="6">
    <location>
        <begin position="678"/>
        <end position="689"/>
    </location>
</feature>
<feature type="compositionally biased region" description="Acidic residues" evidence="6">
    <location>
        <begin position="745"/>
        <end position="763"/>
    </location>
</feature>
<feature type="compositionally biased region" description="Basic and acidic residues" evidence="6">
    <location>
        <begin position="764"/>
        <end position="778"/>
    </location>
</feature>
<accession>F4K4Y5</accession>
<accession>B9DFC8</accession>
<accession>Q9FM72</accession>
<gene>
    <name evidence="8" type="primary">DEK4</name>
    <name evidence="11" type="ordered locus">At5g55660</name>
    <name evidence="12" type="ORF">MDF20.10</name>
</gene>
<evidence type="ECO:0000250" key="1">
    <source>
        <dbReference type="UniProtKB" id="P35659"/>
    </source>
</evidence>
<evidence type="ECO:0000250" key="2">
    <source>
        <dbReference type="UniProtKB" id="Q9SUA1"/>
    </source>
</evidence>
<evidence type="ECO:0000255" key="3"/>
<evidence type="ECO:0000255" key="4">
    <source>
        <dbReference type="PROSITE-ProRule" id="PRU00768"/>
    </source>
</evidence>
<evidence type="ECO:0000255" key="5">
    <source>
        <dbReference type="PROSITE-ProRule" id="PRU01342"/>
    </source>
</evidence>
<evidence type="ECO:0000256" key="6">
    <source>
        <dbReference type="SAM" id="MobiDB-lite"/>
    </source>
</evidence>
<evidence type="ECO:0000269" key="7">
    <source>
    </source>
</evidence>
<evidence type="ECO:0000303" key="8">
    <source>
    </source>
</evidence>
<evidence type="ECO:0000303" key="9">
    <source>
    </source>
</evidence>
<evidence type="ECO:0000305" key="10"/>
<evidence type="ECO:0000312" key="11">
    <source>
        <dbReference type="Araport" id="AT5G55660"/>
    </source>
</evidence>
<evidence type="ECO:0000312" key="12">
    <source>
        <dbReference type="EMBL" id="BAB09233.1"/>
    </source>
</evidence>
<organism>
    <name type="scientific">Arabidopsis thaliana</name>
    <name type="common">Mouse-ear cress</name>
    <dbReference type="NCBI Taxonomy" id="3702"/>
    <lineage>
        <taxon>Eukaryota</taxon>
        <taxon>Viridiplantae</taxon>
        <taxon>Streptophyta</taxon>
        <taxon>Embryophyta</taxon>
        <taxon>Tracheophyta</taxon>
        <taxon>Spermatophyta</taxon>
        <taxon>Magnoliopsida</taxon>
        <taxon>eudicotyledons</taxon>
        <taxon>Gunneridae</taxon>
        <taxon>Pentapetalae</taxon>
        <taxon>rosids</taxon>
        <taxon>malvids</taxon>
        <taxon>Brassicales</taxon>
        <taxon>Brassicaceae</taxon>
        <taxon>Camelineae</taxon>
        <taxon>Arabidopsis</taxon>
    </lineage>
</organism>
<reference key="1">
    <citation type="journal article" date="1998" name="DNA Res.">
        <title>Structural analysis of Arabidopsis thaliana chromosome 5. IV. Sequence features of the regions of 1,456,315 bp covered by nineteen physically assigned P1 and TAC clones.</title>
        <authorList>
            <person name="Sato S."/>
            <person name="Kaneko T."/>
            <person name="Kotani H."/>
            <person name="Nakamura Y."/>
            <person name="Asamizu E."/>
            <person name="Miyajima N."/>
            <person name="Tabata S."/>
        </authorList>
    </citation>
    <scope>NUCLEOTIDE SEQUENCE [LARGE SCALE GENOMIC DNA]</scope>
    <source>
        <strain>cv. Columbia</strain>
    </source>
</reference>
<reference key="2">
    <citation type="journal article" date="2017" name="Plant J.">
        <title>Araport11: a complete reannotation of the Arabidopsis thaliana reference genome.</title>
        <authorList>
            <person name="Cheng C.Y."/>
            <person name="Krishnakumar V."/>
            <person name="Chan A.P."/>
            <person name="Thibaud-Nissen F."/>
            <person name="Schobel S."/>
            <person name="Town C.D."/>
        </authorList>
    </citation>
    <scope>GENOME REANNOTATION</scope>
    <source>
        <strain>cv. Columbia</strain>
    </source>
</reference>
<reference key="3">
    <citation type="journal article" date="2009" name="DNA Res.">
        <title>Analysis of multiple occurrences of alternative splicing events in Arabidopsis thaliana using novel sequenced full-length cDNAs.</title>
        <authorList>
            <person name="Iida K."/>
            <person name="Fukami-Kobayashi K."/>
            <person name="Toyoda A."/>
            <person name="Sakaki Y."/>
            <person name="Kobayashi M."/>
            <person name="Seki M."/>
            <person name="Shinozaki K."/>
        </authorList>
    </citation>
    <scope>NUCLEOTIDE SEQUENCE [LARGE SCALE MRNA] OF 136-778</scope>
    <source>
        <strain>cv. Columbia</strain>
        <tissue>Rosette leaf</tissue>
    </source>
</reference>
<reference key="4">
    <citation type="journal article" date="2005" name="Mol. Biol. Cell">
        <title>Proteomic analysis of the Arabidopsis nucleolus suggests novel nucleolar functions.</title>
        <authorList>
            <person name="Pendle A.F."/>
            <person name="Clark G.P."/>
            <person name="Boon R."/>
            <person name="Lewandowska D."/>
            <person name="Lam Y.W."/>
            <person name="Andersen J."/>
            <person name="Mann M."/>
            <person name="Lamond A.I."/>
            <person name="Brown J.W."/>
            <person name="Shaw P.J."/>
        </authorList>
    </citation>
    <scope>GENE FAMILY</scope>
    <scope>NOMENCLATURE</scope>
</reference>
<reference key="5">
    <citation type="journal article" date="2009" name="Plant Physiol.">
        <title>Large-scale Arabidopsis phosphoproteome profiling reveals novel chloroplast kinase substrates and phosphorylation networks.</title>
        <authorList>
            <person name="Reiland S."/>
            <person name="Messerli G."/>
            <person name="Baerenfaller K."/>
            <person name="Gerrits B."/>
            <person name="Endler A."/>
            <person name="Grossmann J."/>
            <person name="Gruissem W."/>
            <person name="Baginsky S."/>
        </authorList>
    </citation>
    <scope>IDENTIFICATION BY MASS SPECTROMETRY [LARGE SCALE ANALYSIS]</scope>
</reference>
<reference key="6">
    <citation type="journal article" date="2014" name="Plant Cell">
        <title>A DEK domain-containing protein modulates chromatin structure and function in Arabidopsis.</title>
        <authorList>
            <person name="Waidmann S."/>
            <person name="Kusenda B."/>
            <person name="Mayerhofer J."/>
            <person name="Mechtler K."/>
            <person name="Jonak C."/>
        </authorList>
    </citation>
    <scope>INTERACTION WITH DEK3</scope>
    <scope>IDENTIFICATION BY MASS SPECTROMETRY</scope>
    <source>
        <strain>cv. Columbia</strain>
    </source>
</reference>
<sequence length="778" mass="87207">MGEEDTKVIVEPTANGTSSLQKTSDAISGKEVQENASGKEVQESKKEEDTGLEKMEIDDEGKQHEGESETGDKEVEVTEEEKKDVGEDKEQPEADKMDEDTDDKNLKADDGVSGVATEEDAVMKESVESADNKDAENPEGEQEKESKEEKLEGGKANGNEEGDTEEKLVGGDKGDDVDEAEKVENVDEDDKEEALKEKNEAELAEEEETNKGEEVKEANKEDDVEADTKVAEPEVEDKKTESKDENEDKEEEKEDEKEESMDDKEDEKEESNDDDKEDEKEESNDDKEDKKEDIKKSNKRGKGKTEKTRGKTKSDEEKKDIEPKTPFFSDRPVRERKSVERLVAVVDKDSSREFHVEKGKGTPLKDIPNVAYKVSRKKSDEVFKQLHTILFGGKRVKATQLKAHILRFSGYKWQGDEEKAKLKVKEKFEKINKEKLLEFCDLFDISVAKATTKKEDIVTKLVEFLEKPHATTDVLVNEKEKGVKRKRTPKKSSPAAGSSSSKRSAKSQKKTEEATRTNKKSVAHSDDESEEEKEDDEEEEKEQEVEEEEEENENGIPDKSEDEAPQLSESEENVESEEESEEETKKKKRGSRTSSDKKESAGKSRSKKTAVPTKSSPPKKATQKRSAGKRKKSDDDSDTSPKASSKRKKTEKPAKEQAAAPLKSVSKEKPVIGKRGGKGKDKNKEPSDEELKTAIIDILKGVDFNTATFTDILKRLDAKFNISLASKKSSIKRMIQDELTKLADEAEDEEGEEEDAEHEEEEEKEKAKGSGGGEEVKA</sequence>
<protein>
    <recommendedName>
        <fullName evidence="8">DEK domain-containing chromatin-associated protein 4</fullName>
        <shortName evidence="9">At-DEK4</shortName>
        <shortName evidence="8">AtDEK-4</shortName>
        <shortName evidence="8">Protein DEK 4</shortName>
    </recommendedName>
</protein>
<dbReference type="EMBL" id="AB009050">
    <property type="protein sequence ID" value="BAB09233.1"/>
    <property type="status" value="ALT_SEQ"/>
    <property type="molecule type" value="Genomic_DNA"/>
</dbReference>
<dbReference type="EMBL" id="CP002688">
    <property type="protein sequence ID" value="AED96664.1"/>
    <property type="molecule type" value="Genomic_DNA"/>
</dbReference>
<dbReference type="EMBL" id="AK316718">
    <property type="protein sequence ID" value="BAH19445.1"/>
    <property type="molecule type" value="mRNA"/>
</dbReference>
<dbReference type="RefSeq" id="NP_200377.1">
    <property type="nucleotide sequence ID" value="NM_124948.4"/>
</dbReference>
<dbReference type="SMR" id="F4K4Y5"/>
<dbReference type="FunCoup" id="F4K4Y5">
    <property type="interactions" value="355"/>
</dbReference>
<dbReference type="IntAct" id="F4K4Y5">
    <property type="interactions" value="6"/>
</dbReference>
<dbReference type="STRING" id="3702.F4K4Y5"/>
<dbReference type="iPTMnet" id="F4K4Y5"/>
<dbReference type="PaxDb" id="3702-AT5G55660.1"/>
<dbReference type="ProteomicsDB" id="216037"/>
<dbReference type="EnsemblPlants" id="AT5G55660.1">
    <property type="protein sequence ID" value="AT5G55660.1"/>
    <property type="gene ID" value="AT5G55660"/>
</dbReference>
<dbReference type="GeneID" id="835660"/>
<dbReference type="Gramene" id="AT5G55660.1">
    <property type="protein sequence ID" value="AT5G55660.1"/>
    <property type="gene ID" value="AT5G55660"/>
</dbReference>
<dbReference type="KEGG" id="ath:AT5G55660"/>
<dbReference type="Araport" id="AT5G55660"/>
<dbReference type="TAIR" id="AT5G55660"/>
<dbReference type="eggNOG" id="KOG2266">
    <property type="taxonomic scope" value="Eukaryota"/>
</dbReference>
<dbReference type="HOGENOM" id="CLU_011980_0_0_1"/>
<dbReference type="InParanoid" id="F4K4Y5"/>
<dbReference type="OMA" id="KTPFPDR"/>
<dbReference type="CD-CODE" id="4299E36E">
    <property type="entry name" value="Nucleolus"/>
</dbReference>
<dbReference type="PRO" id="PR:F4K4Y5"/>
<dbReference type="Proteomes" id="UP000006548">
    <property type="component" value="Chromosome 5"/>
</dbReference>
<dbReference type="ExpressionAtlas" id="F4K4Y5">
    <property type="expression patterns" value="baseline and differential"/>
</dbReference>
<dbReference type="GO" id="GO:0005739">
    <property type="term" value="C:mitochondrion"/>
    <property type="evidence" value="ECO:0007005"/>
    <property type="project" value="TAIR"/>
</dbReference>
<dbReference type="GO" id="GO:0005730">
    <property type="term" value="C:nucleolus"/>
    <property type="evidence" value="ECO:0007669"/>
    <property type="project" value="UniProtKB-SubCell"/>
</dbReference>
<dbReference type="GO" id="GO:0009536">
    <property type="term" value="C:plastid"/>
    <property type="evidence" value="ECO:0007005"/>
    <property type="project" value="TAIR"/>
</dbReference>
<dbReference type="GO" id="GO:0003677">
    <property type="term" value="F:DNA binding"/>
    <property type="evidence" value="ECO:0007669"/>
    <property type="project" value="UniProtKB-KW"/>
</dbReference>
<dbReference type="GO" id="GO:0006325">
    <property type="term" value="P:chromatin organization"/>
    <property type="evidence" value="ECO:0007669"/>
    <property type="project" value="UniProtKB-KW"/>
</dbReference>
<dbReference type="FunFam" id="1.10.10.60:FF:000220">
    <property type="entry name" value="DEK domain-containing chromatin associated protein"/>
    <property type="match status" value="1"/>
</dbReference>
<dbReference type="Gene3D" id="1.10.10.60">
    <property type="entry name" value="Homeodomain-like"/>
    <property type="match status" value="1"/>
</dbReference>
<dbReference type="InterPro" id="IPR044198">
    <property type="entry name" value="DEK"/>
</dbReference>
<dbReference type="InterPro" id="IPR014876">
    <property type="entry name" value="DEK_C"/>
</dbReference>
<dbReference type="PANTHER" id="PTHR13468:SF18">
    <property type="entry name" value="DEK CARBOXY-TERMINAL DOMAIN PROTEIN-RELATED"/>
    <property type="match status" value="1"/>
</dbReference>
<dbReference type="PANTHER" id="PTHR13468">
    <property type="entry name" value="DEK PROTEIN"/>
    <property type="match status" value="1"/>
</dbReference>
<dbReference type="Pfam" id="PF08766">
    <property type="entry name" value="DEK_C"/>
    <property type="match status" value="1"/>
</dbReference>
<dbReference type="SUPFAM" id="SSF109715">
    <property type="entry name" value="DEK C-terminal domain"/>
    <property type="match status" value="1"/>
</dbReference>
<dbReference type="PROSITE" id="PS51998">
    <property type="entry name" value="DEK_C"/>
    <property type="match status" value="1"/>
</dbReference>
<name>DEKP4_ARATH</name>